<protein>
    <recommendedName>
        <fullName>U3 small nucleolar ribonucleoprotein protein IMP4</fullName>
        <shortName>U3 snoRNP protein IMP4</shortName>
    </recommendedName>
</protein>
<organism>
    <name type="scientific">Mus musculus</name>
    <name type="common">Mouse</name>
    <dbReference type="NCBI Taxonomy" id="10090"/>
    <lineage>
        <taxon>Eukaryota</taxon>
        <taxon>Metazoa</taxon>
        <taxon>Chordata</taxon>
        <taxon>Craniata</taxon>
        <taxon>Vertebrata</taxon>
        <taxon>Euteleostomi</taxon>
        <taxon>Mammalia</taxon>
        <taxon>Eutheria</taxon>
        <taxon>Euarchontoglires</taxon>
        <taxon>Glires</taxon>
        <taxon>Rodentia</taxon>
        <taxon>Myomorpha</taxon>
        <taxon>Muroidea</taxon>
        <taxon>Muridae</taxon>
        <taxon>Murinae</taxon>
        <taxon>Mus</taxon>
        <taxon>Mus</taxon>
    </lineage>
</organism>
<reference key="1">
    <citation type="journal article" date="2003" name="Nucleic Acids Res.">
        <title>The human Imp3 and Imp4 proteins form a ternary complex with hMpp10, which only interacts with the U3 snoRNA in 60-80S ribonucleoprotein complexes.</title>
        <authorList>
            <person name="Granneman S."/>
            <person name="Gallagher J.E.G."/>
            <person name="Vogelzangs J."/>
            <person name="Horstman W."/>
            <person name="van Venrooij W.J."/>
            <person name="Baserga S.J."/>
            <person name="Pruijn G.J.M."/>
        </authorList>
    </citation>
    <scope>NUCLEOTIDE SEQUENCE [MRNA]</scope>
</reference>
<reference key="2">
    <citation type="journal article" date="2005" name="Science">
        <title>The transcriptional landscape of the mammalian genome.</title>
        <authorList>
            <person name="Carninci P."/>
            <person name="Kasukawa T."/>
            <person name="Katayama S."/>
            <person name="Gough J."/>
            <person name="Frith M.C."/>
            <person name="Maeda N."/>
            <person name="Oyama R."/>
            <person name="Ravasi T."/>
            <person name="Lenhard B."/>
            <person name="Wells C."/>
            <person name="Kodzius R."/>
            <person name="Shimokawa K."/>
            <person name="Bajic V.B."/>
            <person name="Brenner S.E."/>
            <person name="Batalov S."/>
            <person name="Forrest A.R."/>
            <person name="Zavolan M."/>
            <person name="Davis M.J."/>
            <person name="Wilming L.G."/>
            <person name="Aidinis V."/>
            <person name="Allen J.E."/>
            <person name="Ambesi-Impiombato A."/>
            <person name="Apweiler R."/>
            <person name="Aturaliya R.N."/>
            <person name="Bailey T.L."/>
            <person name="Bansal M."/>
            <person name="Baxter L."/>
            <person name="Beisel K.W."/>
            <person name="Bersano T."/>
            <person name="Bono H."/>
            <person name="Chalk A.M."/>
            <person name="Chiu K.P."/>
            <person name="Choudhary V."/>
            <person name="Christoffels A."/>
            <person name="Clutterbuck D.R."/>
            <person name="Crowe M.L."/>
            <person name="Dalla E."/>
            <person name="Dalrymple B.P."/>
            <person name="de Bono B."/>
            <person name="Della Gatta G."/>
            <person name="di Bernardo D."/>
            <person name="Down T."/>
            <person name="Engstrom P."/>
            <person name="Fagiolini M."/>
            <person name="Faulkner G."/>
            <person name="Fletcher C.F."/>
            <person name="Fukushima T."/>
            <person name="Furuno M."/>
            <person name="Futaki S."/>
            <person name="Gariboldi M."/>
            <person name="Georgii-Hemming P."/>
            <person name="Gingeras T.R."/>
            <person name="Gojobori T."/>
            <person name="Green R.E."/>
            <person name="Gustincich S."/>
            <person name="Harbers M."/>
            <person name="Hayashi Y."/>
            <person name="Hensch T.K."/>
            <person name="Hirokawa N."/>
            <person name="Hill D."/>
            <person name="Huminiecki L."/>
            <person name="Iacono M."/>
            <person name="Ikeo K."/>
            <person name="Iwama A."/>
            <person name="Ishikawa T."/>
            <person name="Jakt M."/>
            <person name="Kanapin A."/>
            <person name="Katoh M."/>
            <person name="Kawasawa Y."/>
            <person name="Kelso J."/>
            <person name="Kitamura H."/>
            <person name="Kitano H."/>
            <person name="Kollias G."/>
            <person name="Krishnan S.P."/>
            <person name="Kruger A."/>
            <person name="Kummerfeld S.K."/>
            <person name="Kurochkin I.V."/>
            <person name="Lareau L.F."/>
            <person name="Lazarevic D."/>
            <person name="Lipovich L."/>
            <person name="Liu J."/>
            <person name="Liuni S."/>
            <person name="McWilliam S."/>
            <person name="Madan Babu M."/>
            <person name="Madera M."/>
            <person name="Marchionni L."/>
            <person name="Matsuda H."/>
            <person name="Matsuzawa S."/>
            <person name="Miki H."/>
            <person name="Mignone F."/>
            <person name="Miyake S."/>
            <person name="Morris K."/>
            <person name="Mottagui-Tabar S."/>
            <person name="Mulder N."/>
            <person name="Nakano N."/>
            <person name="Nakauchi H."/>
            <person name="Ng P."/>
            <person name="Nilsson R."/>
            <person name="Nishiguchi S."/>
            <person name="Nishikawa S."/>
            <person name="Nori F."/>
            <person name="Ohara O."/>
            <person name="Okazaki Y."/>
            <person name="Orlando V."/>
            <person name="Pang K.C."/>
            <person name="Pavan W.J."/>
            <person name="Pavesi G."/>
            <person name="Pesole G."/>
            <person name="Petrovsky N."/>
            <person name="Piazza S."/>
            <person name="Reed J."/>
            <person name="Reid J.F."/>
            <person name="Ring B.Z."/>
            <person name="Ringwald M."/>
            <person name="Rost B."/>
            <person name="Ruan Y."/>
            <person name="Salzberg S.L."/>
            <person name="Sandelin A."/>
            <person name="Schneider C."/>
            <person name="Schoenbach C."/>
            <person name="Sekiguchi K."/>
            <person name="Semple C.A."/>
            <person name="Seno S."/>
            <person name="Sessa L."/>
            <person name="Sheng Y."/>
            <person name="Shibata Y."/>
            <person name="Shimada H."/>
            <person name="Shimada K."/>
            <person name="Silva D."/>
            <person name="Sinclair B."/>
            <person name="Sperling S."/>
            <person name="Stupka E."/>
            <person name="Sugiura K."/>
            <person name="Sultana R."/>
            <person name="Takenaka Y."/>
            <person name="Taki K."/>
            <person name="Tammoja K."/>
            <person name="Tan S.L."/>
            <person name="Tang S."/>
            <person name="Taylor M.S."/>
            <person name="Tegner J."/>
            <person name="Teichmann S.A."/>
            <person name="Ueda H.R."/>
            <person name="van Nimwegen E."/>
            <person name="Verardo R."/>
            <person name="Wei C.L."/>
            <person name="Yagi K."/>
            <person name="Yamanishi H."/>
            <person name="Zabarovsky E."/>
            <person name="Zhu S."/>
            <person name="Zimmer A."/>
            <person name="Hide W."/>
            <person name="Bult C."/>
            <person name="Grimmond S.M."/>
            <person name="Teasdale R.D."/>
            <person name="Liu E.T."/>
            <person name="Brusic V."/>
            <person name="Quackenbush J."/>
            <person name="Wahlestedt C."/>
            <person name="Mattick J.S."/>
            <person name="Hume D.A."/>
            <person name="Kai C."/>
            <person name="Sasaki D."/>
            <person name="Tomaru Y."/>
            <person name="Fukuda S."/>
            <person name="Kanamori-Katayama M."/>
            <person name="Suzuki M."/>
            <person name="Aoki J."/>
            <person name="Arakawa T."/>
            <person name="Iida J."/>
            <person name="Imamura K."/>
            <person name="Itoh M."/>
            <person name="Kato T."/>
            <person name="Kawaji H."/>
            <person name="Kawagashira N."/>
            <person name="Kawashima T."/>
            <person name="Kojima M."/>
            <person name="Kondo S."/>
            <person name="Konno H."/>
            <person name="Nakano K."/>
            <person name="Ninomiya N."/>
            <person name="Nishio T."/>
            <person name="Okada M."/>
            <person name="Plessy C."/>
            <person name="Shibata K."/>
            <person name="Shiraki T."/>
            <person name="Suzuki S."/>
            <person name="Tagami M."/>
            <person name="Waki K."/>
            <person name="Watahiki A."/>
            <person name="Okamura-Oho Y."/>
            <person name="Suzuki H."/>
            <person name="Kawai J."/>
            <person name="Hayashizaki Y."/>
        </authorList>
    </citation>
    <scope>NUCLEOTIDE SEQUENCE [LARGE SCALE MRNA]</scope>
    <source>
        <strain>C57BL/6J</strain>
        <tissue>Bone marrow</tissue>
        <tissue>Embryo</tissue>
        <tissue>Lung</tissue>
    </source>
</reference>
<reference key="3">
    <citation type="journal article" date="2004" name="Genome Res.">
        <title>The status, quality, and expansion of the NIH full-length cDNA project: the Mammalian Gene Collection (MGC).</title>
        <authorList>
            <consortium name="The MGC Project Team"/>
        </authorList>
    </citation>
    <scope>NUCLEOTIDE SEQUENCE [LARGE SCALE MRNA]</scope>
    <source>
        <strain>FVB/N</strain>
        <tissue>Liver</tissue>
        <tissue>Mammary tumor</tissue>
    </source>
</reference>
<sequence>MLRREARLRREYLYRKAREEAQRSVQEKKERVKRALEENQLIPTELRREALALQGSLEFDDAGGEGVTSHVDDEYRWAGVEDPKVMITTSRDPSSRLKMFAKELKLVFPGAQRMNRGRHEVGALVRACKANGVTDLLVVHEHRGTPVGLIVSHLPFGPTAYFTLCNVVMRHDIPDLGTMSEAKPHLITHGFSSRLGKRVSDILRYLFPVPKDDSHRVITFANQDDYISFRHHVYKKTDHRNVELTEVGPRFELKLYMIRLGTLEQEATADVEWRWHPYTNTARKRVFLSAE</sequence>
<proteinExistence type="evidence at transcript level"/>
<evidence type="ECO:0000250" key="1">
    <source>
        <dbReference type="UniProtKB" id="Q96G21"/>
    </source>
</evidence>
<evidence type="ECO:0000255" key="2">
    <source>
        <dbReference type="PROSITE-ProRule" id="PRU00034"/>
    </source>
</evidence>
<evidence type="ECO:0000305" key="3"/>
<gene>
    <name type="primary">Imp4</name>
    <name type="synonym">D1Wsu40e</name>
</gene>
<accession>Q8VHZ7</accession>
<accession>Q3U8H6</accession>
<accession>Q8CI42</accession>
<accession>Q9CWN6</accession>
<accession>Q9CYT5</accession>
<keyword id="KW-0539">Nucleus</keyword>
<keyword id="KW-1185">Reference proteome</keyword>
<keyword id="KW-0687">Ribonucleoprotein</keyword>
<keyword id="KW-0690">Ribosome biogenesis</keyword>
<keyword id="KW-0698">rRNA processing</keyword>
<comment type="function">
    <text evidence="1">Component of the 60-80S U3 small nucleolar ribonucleoprotein (U3 snoRNP). Required for the early cleavages during pre-18S ribosomal RNA processing. Part of the small subunit (SSU) processome, first precursor of the small eukaryotic ribosomal subunit. During the assembly of the SSU processome in the nucleolus, many ribosome biogenesis factors, an RNA chaperone and ribosomal proteins associate with the nascent pre-rRNA and work in concert to generate RNA folding, modifications, rearrangements and cleavage as well as targeted degradation of pre-ribosomal RNA by the RNA exosome.</text>
</comment>
<comment type="subunit">
    <text evidence="1">Part of the small subunit (SSU) processome, composed of more than 70 proteins and the RNA chaperone small nucleolar RNA (snoRNA) U3. Component of a heterotrimeric complex containing IMP3, IMP4 and MPHOSPH10. Interacts with MPHOSPH10.</text>
</comment>
<comment type="subcellular location">
    <subcellularLocation>
        <location evidence="1">Nucleus</location>
        <location evidence="1">Nucleolus</location>
    </subcellularLocation>
</comment>
<comment type="sequence caution" evidence="3">
    <conflict type="frameshift">
        <sequence resource="EMBL-CDS" id="BAB26989"/>
    </conflict>
</comment>
<name>IMP4_MOUSE</name>
<dbReference type="EMBL" id="AF334609">
    <property type="protein sequence ID" value="AAL73190.1"/>
    <property type="molecule type" value="mRNA"/>
</dbReference>
<dbReference type="EMBL" id="AK010504">
    <property type="protein sequence ID" value="BAB26989.1"/>
    <property type="status" value="ALT_FRAME"/>
    <property type="molecule type" value="mRNA"/>
</dbReference>
<dbReference type="EMBL" id="AK013334">
    <property type="protein sequence ID" value="BAB28797.1"/>
    <property type="molecule type" value="mRNA"/>
</dbReference>
<dbReference type="EMBL" id="AK084933">
    <property type="protein sequence ID" value="BAC39313.1"/>
    <property type="molecule type" value="mRNA"/>
</dbReference>
<dbReference type="EMBL" id="AK151176">
    <property type="protein sequence ID" value="BAE30178.1"/>
    <property type="molecule type" value="mRNA"/>
</dbReference>
<dbReference type="EMBL" id="AK152214">
    <property type="protein sequence ID" value="BAE31042.1"/>
    <property type="molecule type" value="mRNA"/>
</dbReference>
<dbReference type="EMBL" id="AK166903">
    <property type="protein sequence ID" value="BAE39105.1"/>
    <property type="molecule type" value="mRNA"/>
</dbReference>
<dbReference type="EMBL" id="BC037602">
    <property type="protein sequence ID" value="AAH37602.1"/>
    <property type="molecule type" value="mRNA"/>
</dbReference>
<dbReference type="EMBL" id="BC069930">
    <property type="protein sequence ID" value="AAH69930.1"/>
    <property type="molecule type" value="mRNA"/>
</dbReference>
<dbReference type="CCDS" id="CCDS35536.1"/>
<dbReference type="RefSeq" id="NP_848716.2">
    <property type="nucleotide sequence ID" value="NM_178601.4"/>
</dbReference>
<dbReference type="SMR" id="Q8VHZ7"/>
<dbReference type="BioGRID" id="205703">
    <property type="interactions" value="2"/>
</dbReference>
<dbReference type="FunCoup" id="Q8VHZ7">
    <property type="interactions" value="2508"/>
</dbReference>
<dbReference type="IntAct" id="Q8VHZ7">
    <property type="interactions" value="1"/>
</dbReference>
<dbReference type="STRING" id="10090.ENSMUSP00000027303"/>
<dbReference type="PhosphoSitePlus" id="Q8VHZ7"/>
<dbReference type="PaxDb" id="10090-ENSMUSP00000027303"/>
<dbReference type="PeptideAtlas" id="Q8VHZ7"/>
<dbReference type="ProteomicsDB" id="267332"/>
<dbReference type="Pumba" id="Q8VHZ7"/>
<dbReference type="Antibodypedia" id="47574">
    <property type="antibodies" value="120 antibodies from 21 providers"/>
</dbReference>
<dbReference type="Ensembl" id="ENSMUST00000027303.14">
    <property type="protein sequence ID" value="ENSMUSP00000027303.8"/>
    <property type="gene ID" value="ENSMUSG00000026127.14"/>
</dbReference>
<dbReference type="GeneID" id="27993"/>
<dbReference type="KEGG" id="mmu:27993"/>
<dbReference type="UCSC" id="uc007aor.2">
    <property type="organism name" value="mouse"/>
</dbReference>
<dbReference type="AGR" id="MGI:106572"/>
<dbReference type="CTD" id="92856"/>
<dbReference type="MGI" id="MGI:106572">
    <property type="gene designation" value="Imp4"/>
</dbReference>
<dbReference type="VEuPathDB" id="HostDB:ENSMUSG00000026127"/>
<dbReference type="eggNOG" id="KOG2781">
    <property type="taxonomic scope" value="Eukaryota"/>
</dbReference>
<dbReference type="GeneTree" id="ENSGT00940000153231"/>
<dbReference type="HOGENOM" id="CLU_040063_2_0_1"/>
<dbReference type="InParanoid" id="Q8VHZ7"/>
<dbReference type="OMA" id="IGTMSEQ"/>
<dbReference type="OrthoDB" id="10253204at2759"/>
<dbReference type="PhylomeDB" id="Q8VHZ7"/>
<dbReference type="TreeFam" id="TF300016"/>
<dbReference type="Reactome" id="R-MMU-6791226">
    <property type="pathway name" value="Major pathway of rRNA processing in the nucleolus and cytosol"/>
</dbReference>
<dbReference type="BioGRID-ORCS" id="27993">
    <property type="hits" value="24 hits in 79 CRISPR screens"/>
</dbReference>
<dbReference type="ChiTaRS" id="Imp4">
    <property type="organism name" value="mouse"/>
</dbReference>
<dbReference type="PRO" id="PR:Q8VHZ7"/>
<dbReference type="Proteomes" id="UP000000589">
    <property type="component" value="Chromosome 1"/>
</dbReference>
<dbReference type="RNAct" id="Q8VHZ7">
    <property type="molecule type" value="protein"/>
</dbReference>
<dbReference type="Bgee" id="ENSMUSG00000026127">
    <property type="expression patterns" value="Expressed in animal zygote and 274 other cell types or tissues"/>
</dbReference>
<dbReference type="ExpressionAtlas" id="Q8VHZ7">
    <property type="expression patterns" value="baseline and differential"/>
</dbReference>
<dbReference type="GO" id="GO:0001650">
    <property type="term" value="C:fibrillar center"/>
    <property type="evidence" value="ECO:0007669"/>
    <property type="project" value="Ensembl"/>
</dbReference>
<dbReference type="GO" id="GO:0034457">
    <property type="term" value="C:Mpp10 complex"/>
    <property type="evidence" value="ECO:0000266"/>
    <property type="project" value="MGI"/>
</dbReference>
<dbReference type="GO" id="GO:0005730">
    <property type="term" value="C:nucleolus"/>
    <property type="evidence" value="ECO:0000250"/>
    <property type="project" value="HGNC-UCL"/>
</dbReference>
<dbReference type="GO" id="GO:0030684">
    <property type="term" value="C:preribosome"/>
    <property type="evidence" value="ECO:0000266"/>
    <property type="project" value="MGI"/>
</dbReference>
<dbReference type="GO" id="GO:0032040">
    <property type="term" value="C:small-subunit processome"/>
    <property type="evidence" value="ECO:0000250"/>
    <property type="project" value="UniProtKB"/>
</dbReference>
<dbReference type="GO" id="GO:0042134">
    <property type="term" value="F:rRNA primary transcript binding"/>
    <property type="evidence" value="ECO:0007669"/>
    <property type="project" value="InterPro"/>
</dbReference>
<dbReference type="GO" id="GO:0042274">
    <property type="term" value="P:ribosomal small subunit biogenesis"/>
    <property type="evidence" value="ECO:0000250"/>
    <property type="project" value="UniProtKB"/>
</dbReference>
<dbReference type="GO" id="GO:0006364">
    <property type="term" value="P:rRNA processing"/>
    <property type="evidence" value="ECO:0007669"/>
    <property type="project" value="UniProtKB-KW"/>
</dbReference>
<dbReference type="FunFam" id="3.40.50.10480:FF:000001">
    <property type="entry name" value="IMP4, U3 small nucleolar ribonucleoprotein"/>
    <property type="match status" value="1"/>
</dbReference>
<dbReference type="Gene3D" id="3.40.50.10480">
    <property type="entry name" value="Probable brix-domain ribosomal biogenesis protein"/>
    <property type="match status" value="1"/>
</dbReference>
<dbReference type="InterPro" id="IPR007109">
    <property type="entry name" value="Brix"/>
</dbReference>
<dbReference type="InterPro" id="IPR044281">
    <property type="entry name" value="IMP4/RPF1"/>
</dbReference>
<dbReference type="PANTHER" id="PTHR22734">
    <property type="entry name" value="U3 SMALL NUCLEOLAR RIBONUCLEOPROTEIN PROTEIN IMP4"/>
    <property type="match status" value="1"/>
</dbReference>
<dbReference type="PANTHER" id="PTHR22734:SF2">
    <property type="entry name" value="U3 SMALL NUCLEOLAR RIBONUCLEOPROTEIN PROTEIN IMP4"/>
    <property type="match status" value="1"/>
</dbReference>
<dbReference type="Pfam" id="PF04427">
    <property type="entry name" value="Brix"/>
    <property type="match status" value="1"/>
</dbReference>
<dbReference type="SMART" id="SM00879">
    <property type="entry name" value="Brix"/>
    <property type="match status" value="1"/>
</dbReference>
<dbReference type="SUPFAM" id="SSF52954">
    <property type="entry name" value="Class II aaRS ABD-related"/>
    <property type="match status" value="1"/>
</dbReference>
<dbReference type="PROSITE" id="PS50833">
    <property type="entry name" value="BRIX"/>
    <property type="match status" value="1"/>
</dbReference>
<feature type="chain" id="PRO_0000120237" description="U3 small nucleolar ribonucleoprotein protein IMP4">
    <location>
        <begin position="1"/>
        <end position="291"/>
    </location>
</feature>
<feature type="domain" description="Brix" evidence="2">
    <location>
        <begin position="83"/>
        <end position="264"/>
    </location>
</feature>
<feature type="sequence conflict" description="In Ref. 2; BAB28797." evidence="3" ref="2">
    <original>QR</original>
    <variation>HG</variation>
    <location>
        <begin position="22"/>
        <end position="23"/>
    </location>
</feature>